<protein>
    <recommendedName>
        <fullName evidence="4">Extended FMRFamide-8</fullName>
        <shortName evidence="4">FMRFa-8</shortName>
    </recommendedName>
</protein>
<accession>B3A087</accession>
<name>FAR8_LOBRE</name>
<dbReference type="GO" id="GO:0005576">
    <property type="term" value="C:extracellular region"/>
    <property type="evidence" value="ECO:0007669"/>
    <property type="project" value="UniProtKB-SubCell"/>
</dbReference>
<dbReference type="GO" id="GO:0007218">
    <property type="term" value="P:neuropeptide signaling pathway"/>
    <property type="evidence" value="ECO:0007669"/>
    <property type="project" value="UniProtKB-KW"/>
</dbReference>
<keyword id="KW-0027">Amidation</keyword>
<keyword id="KW-0903">Direct protein sequencing</keyword>
<keyword id="KW-0527">Neuropeptide</keyword>
<keyword id="KW-0964">Secreted</keyword>
<proteinExistence type="evidence at protein level"/>
<evidence type="ECO:0000250" key="1">
    <source>
        <dbReference type="UniProtKB" id="P34405"/>
    </source>
</evidence>
<evidence type="ECO:0000255" key="2"/>
<evidence type="ECO:0000269" key="3">
    <source>
    </source>
</evidence>
<evidence type="ECO:0000303" key="4">
    <source>
    </source>
</evidence>
<evidence type="ECO:0000305" key="5"/>
<evidence type="ECO:0000305" key="6">
    <source>
    </source>
</evidence>
<feature type="peptide" id="PRO_0000421534" description="Extended FMRFamide-8" evidence="3">
    <location>
        <begin position="1"/>
        <end position="9"/>
    </location>
</feature>
<feature type="modified residue" description="Leucine amide" evidence="3">
    <location>
        <position position="9"/>
    </location>
</feature>
<feature type="unsure residue" description="L or I" evidence="3">
    <location>
        <position position="9"/>
    </location>
</feature>
<reference evidence="5" key="1">
    <citation type="journal article" date="2012" name="Syst. Biol.">
        <title>Peptidomics-based phylogeny and biogeography of Mantophasmatodea (Hexapoda).</title>
        <authorList>
            <person name="Predel R."/>
            <person name="Neupert S."/>
            <person name="Huetteroth W."/>
            <person name="Kahnt J."/>
            <person name="Waidelich D."/>
            <person name="Roth S."/>
        </authorList>
    </citation>
    <scope>PROTEIN SEQUENCE</scope>
    <scope>AMIDATION AT LEU-9</scope>
    <source>
        <tissue evidence="3">Thoracic perisympathetic organs</tissue>
    </source>
</reference>
<organism>
    <name type="scientific">Lobatophasma redelinghuysense</name>
    <name type="common">Gladiator</name>
    <name type="synonym">Heel-walker</name>
    <dbReference type="NCBI Taxonomy" id="253128"/>
    <lineage>
        <taxon>Eukaryota</taxon>
        <taxon>Metazoa</taxon>
        <taxon>Ecdysozoa</taxon>
        <taxon>Arthropoda</taxon>
        <taxon>Hexapoda</taxon>
        <taxon>Insecta</taxon>
        <taxon>Pterygota</taxon>
        <taxon>Neoptera</taxon>
        <taxon>Polyneoptera</taxon>
        <taxon>Mantophasmatodea</taxon>
        <taxon>Austrophasmatidae</taxon>
        <taxon>Lobatophasma</taxon>
    </lineage>
</organism>
<sequence>ARTDNFVRL</sequence>
<comment type="function">
    <text evidence="1">FMRFamides and FMRFamide-like peptides are neuropeptides.</text>
</comment>
<comment type="subcellular location">
    <subcellularLocation>
        <location evidence="6">Secreted</location>
    </subcellularLocation>
</comment>
<comment type="similarity">
    <text evidence="2">Belongs to the FARP (FMRF amide related peptide) family.</text>
</comment>